<name>RPN1_RAT</name>
<reference key="1">
    <citation type="journal article" date="1987" name="J. Cell Biol.">
        <title>Isolation and characterization of cDNA clones for rat ribophorin I: complete coding sequence and in vitro synthesis and insertion of the encoded product into endoplasmic reticulum membranes.</title>
        <authorList>
            <person name="Harnik-Ort V."/>
            <person name="Prakash K."/>
            <person name="Marcantonio E."/>
            <person name="Colman D.R."/>
            <person name="Rosenfeld M.G."/>
            <person name="Adesnik M."/>
            <person name="Sabatini D.D."/>
            <person name="Kreibich G."/>
        </authorList>
    </citation>
    <scope>NUCLEOTIDE SEQUENCE [MRNA]</scope>
    <source>
        <tissue>Brain</tissue>
    </source>
</reference>
<reference key="2">
    <citation type="journal article" date="1990" name="J. Biol. Chem.">
        <title>Structure and chromosomal location of the rat ribophorin I gene.</title>
        <authorList>
            <person name="Behal A."/>
            <person name="Prakash K."/>
            <person name="D'Eustachio P."/>
            <person name="Adesnik M."/>
            <person name="Sabatini D.D."/>
            <person name="Kreibich G."/>
        </authorList>
    </citation>
    <scope>NUCLEOTIDE SEQUENCE [GENOMIC DNA] OF 1-31</scope>
</reference>
<proteinExistence type="evidence at transcript level"/>
<feature type="signal peptide">
    <location>
        <begin position="1"/>
        <end position="22"/>
    </location>
</feature>
<feature type="chain" id="PRO_0000022243" description="Dolichyl-diphosphooligosaccharide--protein glycosyltransferase subunit 1">
    <location>
        <begin position="23"/>
        <end position="605"/>
    </location>
</feature>
<feature type="topological domain" description="Lumenal" evidence="4">
    <location>
        <begin position="23"/>
        <end position="437"/>
    </location>
</feature>
<feature type="transmembrane region" description="Helical" evidence="4">
    <location>
        <begin position="438"/>
        <end position="455"/>
    </location>
</feature>
<feature type="topological domain" description="Cytoplasmic" evidence="4">
    <location>
        <begin position="456"/>
        <end position="605"/>
    </location>
</feature>
<feature type="modified residue" description="N6-acetyllysine" evidence="2">
    <location>
        <position position="185"/>
    </location>
</feature>
<feature type="modified residue" description="N6-acetyllysine; alternate" evidence="3">
    <location>
        <position position="536"/>
    </location>
</feature>
<feature type="glycosylation site" description="N-linked (GlcNAc...) asparagine" evidence="4">
    <location>
        <position position="297"/>
    </location>
</feature>
<feature type="cross-link" description="Glycyl lysine isopeptide (Lys-Gly) (interchain with G-Cter in SUMO2); alternate" evidence="2">
    <location>
        <position position="536"/>
    </location>
</feature>
<feature type="sequence conflict" description="In Ref. 2." evidence="5" ref="2">
    <original>APTPGSASSEAPPLVN</original>
    <variation>PDAWQRLFGGSAAGQR</variation>
    <location>
        <begin position="16"/>
        <end position="31"/>
    </location>
</feature>
<sequence length="605" mass="68304">MEAPIVLLLLLWLALAPTPGSASSEAPPLVNEDVKRTVDLSSHLAKVTAEVVLAHPGGGSTARASSFVLALEPELESRLAHLGVQVKGEDEEDNNLEVRETKMKGKSGRFFTVKLPVALDPGSKISIVVETVYTHVLHPYPTQITQSEKQFVVFEGNHYFYSPYPTKTQTMRVRLASRNVESHTKLGNPSRSEDILDYGPFKDIPAYSQDTFKVHYENNSPFLTITSMTRVIEVSHWGNIAVEENVDLKHTGAVLKGPFSRYDYQRQPDSGISSIRSFKTILPAAAQDVYYRDEIGNVSTSHLLILDDSVEMEIRPRFGLFGGWKTHYIVGYNLPSYEYLYNLGDQYALKMRFVDHVFDEQVIDSLTVKIILPEGAKNIQVDSPYDISRAPDELHYTYLDTFGRPVIVAYKKNLVEQHIQDIVVHYTFNKVLMLQEPLLVVAAFYILFFTVIIYVRLDFSITKDPAAEARMKVACITEQVLTLVNKRLGLYRHFDETVNRYKQSRDISTLNSGKKSLETEHKAVTSEIAVLQSRLKTEGSDLCDRVSEMQKLDAQVKELVLKSAVEAERLVAGKLKKDTYIENEKLSSGKRQELVTKIDHILDAL</sequence>
<protein>
    <recommendedName>
        <fullName evidence="5">Dolichyl-diphosphooligosaccharide--protein glycosyltransferase subunit 1</fullName>
    </recommendedName>
    <alternativeName>
        <fullName>Dolichyl-diphosphooligosaccharide--protein glycosyltransferase 67 kDa subunit</fullName>
    </alternativeName>
    <alternativeName>
        <fullName>Ribophorin I</fullName>
        <shortName>RPN-I</shortName>
    </alternativeName>
    <alternativeName>
        <fullName>Ribophorin-1</fullName>
    </alternativeName>
</protein>
<keyword id="KW-0007">Acetylation</keyword>
<keyword id="KW-0256">Endoplasmic reticulum</keyword>
<keyword id="KW-0325">Glycoprotein</keyword>
<keyword id="KW-1017">Isopeptide bond</keyword>
<keyword id="KW-0472">Membrane</keyword>
<keyword id="KW-1185">Reference proteome</keyword>
<keyword id="KW-0732">Signal</keyword>
<keyword id="KW-0812">Transmembrane</keyword>
<keyword id="KW-1133">Transmembrane helix</keyword>
<keyword id="KW-0832">Ubl conjugation</keyword>
<gene>
    <name evidence="6" type="primary">Rpn1</name>
</gene>
<dbReference type="EMBL" id="X05300">
    <property type="protein sequence ID" value="CAA28919.1"/>
    <property type="molecule type" value="mRNA"/>
</dbReference>
<dbReference type="EMBL" id="M33508">
    <property type="protein sequence ID" value="AAA42043.1"/>
    <property type="molecule type" value="Genomic_DNA"/>
</dbReference>
<dbReference type="PIR" id="A27274">
    <property type="entry name" value="A27274"/>
</dbReference>
<dbReference type="SMR" id="P07153"/>
<dbReference type="BioGRID" id="247626">
    <property type="interactions" value="7"/>
</dbReference>
<dbReference type="FunCoup" id="P07153">
    <property type="interactions" value="3303"/>
</dbReference>
<dbReference type="IntAct" id="P07153">
    <property type="interactions" value="5"/>
</dbReference>
<dbReference type="MINT" id="P07153"/>
<dbReference type="STRING" id="10116.ENSRNOP00000066002"/>
<dbReference type="GlyCosmos" id="P07153">
    <property type="glycosylation" value="1 site, No reported glycans"/>
</dbReference>
<dbReference type="GlyGen" id="P07153">
    <property type="glycosylation" value="3 sites, 1 O-linked glycan (1 site)"/>
</dbReference>
<dbReference type="iPTMnet" id="P07153"/>
<dbReference type="PhosphoSitePlus" id="P07153"/>
<dbReference type="SwissPalm" id="P07153"/>
<dbReference type="jPOST" id="P07153"/>
<dbReference type="PaxDb" id="10116-ENSRNOP00000066002"/>
<dbReference type="PeptideAtlas" id="P07153"/>
<dbReference type="AGR" id="RGD:3594"/>
<dbReference type="RGD" id="3594">
    <property type="gene designation" value="Rpn1"/>
</dbReference>
<dbReference type="eggNOG" id="KOG2291">
    <property type="taxonomic scope" value="Eukaryota"/>
</dbReference>
<dbReference type="InParanoid" id="P07153"/>
<dbReference type="UniPathway" id="UPA00378"/>
<dbReference type="PRO" id="PR:P07153"/>
<dbReference type="Proteomes" id="UP000002494">
    <property type="component" value="Unplaced"/>
</dbReference>
<dbReference type="GO" id="GO:0005789">
    <property type="term" value="C:endoplasmic reticulum membrane"/>
    <property type="evidence" value="ECO:0000266"/>
    <property type="project" value="RGD"/>
</dbReference>
<dbReference type="GO" id="GO:0008250">
    <property type="term" value="C:oligosaccharyltransferase complex"/>
    <property type="evidence" value="ECO:0000266"/>
    <property type="project" value="RGD"/>
</dbReference>
<dbReference type="GO" id="GO:0160226">
    <property type="term" value="C:oligosaccharyltransferase complex A"/>
    <property type="evidence" value="ECO:0000266"/>
    <property type="project" value="RGD"/>
</dbReference>
<dbReference type="GO" id="GO:0160227">
    <property type="term" value="C:oligosaccharyltransferase complex B"/>
    <property type="evidence" value="ECO:0000266"/>
    <property type="project" value="RGD"/>
</dbReference>
<dbReference type="GO" id="GO:0005791">
    <property type="term" value="C:rough endoplasmic reticulum"/>
    <property type="evidence" value="ECO:0000266"/>
    <property type="project" value="RGD"/>
</dbReference>
<dbReference type="GO" id="GO:0015833">
    <property type="term" value="P:peptide transport"/>
    <property type="evidence" value="ECO:0000303"/>
    <property type="project" value="RGD"/>
</dbReference>
<dbReference type="GO" id="GO:0006486">
    <property type="term" value="P:protein glycosylation"/>
    <property type="evidence" value="ECO:0000266"/>
    <property type="project" value="RGD"/>
</dbReference>
<dbReference type="GO" id="GO:0006487">
    <property type="term" value="P:protein N-linked glycosylation"/>
    <property type="evidence" value="ECO:0000266"/>
    <property type="project" value="RGD"/>
</dbReference>
<dbReference type="GO" id="GO:0018279">
    <property type="term" value="P:protein N-linked glycosylation via asparagine"/>
    <property type="evidence" value="ECO:0000266"/>
    <property type="project" value="RGD"/>
</dbReference>
<dbReference type="InterPro" id="IPR007676">
    <property type="entry name" value="Ribophorin_I"/>
</dbReference>
<dbReference type="PANTHER" id="PTHR21049:SF0">
    <property type="entry name" value="DOLICHYL-DIPHOSPHOOLIGOSACCHARIDE--PROTEIN GLYCOSYLTRANSFERASE SUBUNIT 1"/>
    <property type="match status" value="1"/>
</dbReference>
<dbReference type="PANTHER" id="PTHR21049">
    <property type="entry name" value="RIBOPHORIN I"/>
    <property type="match status" value="1"/>
</dbReference>
<dbReference type="Pfam" id="PF04597">
    <property type="entry name" value="Ribophorin_I"/>
    <property type="match status" value="1"/>
</dbReference>
<organism>
    <name type="scientific">Rattus norvegicus</name>
    <name type="common">Rat</name>
    <dbReference type="NCBI Taxonomy" id="10116"/>
    <lineage>
        <taxon>Eukaryota</taxon>
        <taxon>Metazoa</taxon>
        <taxon>Chordata</taxon>
        <taxon>Craniata</taxon>
        <taxon>Vertebrata</taxon>
        <taxon>Euteleostomi</taxon>
        <taxon>Mammalia</taxon>
        <taxon>Eutheria</taxon>
        <taxon>Euarchontoglires</taxon>
        <taxon>Glires</taxon>
        <taxon>Rodentia</taxon>
        <taxon>Myomorpha</taxon>
        <taxon>Muroidea</taxon>
        <taxon>Muridae</taxon>
        <taxon>Murinae</taxon>
        <taxon>Rattus</taxon>
    </lineage>
</organism>
<accession>P07153</accession>
<comment type="function">
    <text evidence="1">Subunit of the oligosaccharyl transferase (OST) complex that catalyzes the initial transfer of a defined glycan (Glc(3)Man(9)GlcNAc(2) in eukaryotes) from the lipid carrier dolichol-pyrophosphate to an asparagine residue within an Asn-X-Ser/Thr consensus motif in nascent polypeptide chains, the first step in protein N-glycosylation. N-glycosylation occurs cotranslationally and the complex associates with the Sec61 complex at the channel-forming translocon complex that mediates protein translocation across the endoplasmic reticulum (ER). All subunits are required for a maximal enzyme activity.</text>
</comment>
<comment type="pathway">
    <text evidence="2">Protein modification; protein glycosylation.</text>
</comment>
<comment type="subunit">
    <text evidence="1 3">Component of the oligosaccharyltransferase (OST) complex. OST exists in two different complex forms which contain common core subunits RPN1, RPN2, OST48, OST4, DAD1 and TMEM258, either STT3A or STT3B as catalytic subunits, and form-specific accessory subunits. STT3A complex assembly occurs through the formation of 3 subcomplexes. Subcomplex 1 contains RPN1 and TMEM258, subcomplex 2 contains the STT3A-specific subunits STT3A, DC2/OSTC, and KCP2 as well as the core subunit OST4, and subcomplex 3 contains RPN2, DAD1, and OST48. The STT3A complex can form stable complexes with the Sec61 complex or with both the Sec61 and TRAP complexes (By similarity). Interacts with TMEM35A/NACHO (By similarity).</text>
</comment>
<comment type="subcellular location">
    <subcellularLocation>
        <location evidence="1">Endoplasmic reticulum membrane</location>
        <topology evidence="1">Single-pass type I membrane protein</topology>
    </subcellularLocation>
</comment>
<comment type="tissue specificity">
    <text>Expressed in all tissues tested.</text>
</comment>
<comment type="PTM">
    <text evidence="2">Ubiquitinated by the ECS(ASB11) complex.</text>
</comment>
<comment type="PTM">
    <text evidence="2">Ufmylated by UFL1 in response to endoplasmic reticulum stress, promoting reticulophagy of endoplasmic reticulum sheets.</text>
</comment>
<comment type="similarity">
    <text evidence="5">Belongs to the OST1 family.</text>
</comment>
<evidence type="ECO:0000250" key="1">
    <source>
        <dbReference type="UniProtKB" id="E2RQ08"/>
    </source>
</evidence>
<evidence type="ECO:0000250" key="2">
    <source>
        <dbReference type="UniProtKB" id="P04843"/>
    </source>
</evidence>
<evidence type="ECO:0000250" key="3">
    <source>
        <dbReference type="UniProtKB" id="Q91YQ5"/>
    </source>
</evidence>
<evidence type="ECO:0000255" key="4"/>
<evidence type="ECO:0000305" key="5"/>
<evidence type="ECO:0000312" key="6">
    <source>
        <dbReference type="RGD" id="3594"/>
    </source>
</evidence>